<comment type="catalytic activity">
    <reaction>
        <text>Cleavage of N-acetylmuramoyl-|-Ala, and of the insulin B chain at 23-Gly-|-Phe-24 &gt; 18-Val-|-Cys(SO3H).</text>
        <dbReference type="EC" id="3.4.24.32"/>
    </reaction>
</comment>
<comment type="cofactor">
    <cofactor>
        <name>Zn(2+)</name>
        <dbReference type="ChEBI" id="CHEBI:29105"/>
    </cofactor>
    <text>Binds 1 zinc ion per subunit.</text>
</comment>
<comment type="similarity">
    <text evidence="3">Belongs to the peptidase M23A family.</text>
</comment>
<evidence type="ECO:0000255" key="1"/>
<evidence type="ECO:0000269" key="2">
    <source ref="1"/>
</evidence>
<evidence type="ECO:0000305" key="3"/>
<accession>P00801</accession>
<sequence length="178" mass="19100">SPNGLLQFPFPRGASWHVGGAHTNTGSGNYPMSSLDMSRGGGSNQNGNWVSASAAGGSFKRHSSCFAEIVHTGGWSTTYYHLMNIQYNTGANVSMNTAIANAPNTQAQALCNGGQSTGPHQHWSLKQNGSFYHLNGTYLSGYRITATGSSYDTNCSRFYLTKNGQNYCYGYYVNPGPN</sequence>
<reference key="1">
    <citation type="submission" date="1974-03" db="PIR data bank">
        <authorList>
            <person name="Damaglou A.P."/>
            <person name="Allen L.C."/>
            <person name="Whitaker D.R."/>
        </authorList>
    </citation>
    <scope>PROTEIN SEQUENCE</scope>
    <scope>DISULFIDE BONDS</scope>
    <source>
        <strain>ATCC 29487 / DSM 2043 / BCRC 11654 / KCTC 12131 / LMG 8762 / VKM B-2235 / UASM 495 / Ly e1</strain>
    </source>
</reference>
<keyword id="KW-0903">Direct protein sequencing</keyword>
<keyword id="KW-1015">Disulfide bond</keyword>
<keyword id="KW-0378">Hydrolase</keyword>
<keyword id="KW-0479">Metal-binding</keyword>
<keyword id="KW-0482">Metalloprotease</keyword>
<keyword id="KW-0645">Protease</keyword>
<keyword id="KW-0862">Zinc</keyword>
<protein>
    <recommendedName>
        <fullName>Beta-lytic metalloendopeptidase</fullName>
        <ecNumber>3.4.24.32</ecNumber>
    </recommendedName>
    <alternativeName>
        <fullName>Beta-lytic protease</fullName>
    </alternativeName>
</protein>
<proteinExistence type="evidence at protein level"/>
<feature type="chain" id="PRO_0000165903" description="Beta-lytic metalloendopeptidase">
    <location>
        <begin position="1"/>
        <end position="178"/>
    </location>
</feature>
<feature type="binding site" evidence="1">
    <location>
        <position position="120"/>
    </location>
    <ligand>
        <name>Zn(2+)</name>
        <dbReference type="ChEBI" id="CHEBI:29105"/>
    </ligand>
</feature>
<feature type="binding site" evidence="1">
    <location>
        <position position="122"/>
    </location>
    <ligand>
        <name>Zn(2+)</name>
        <dbReference type="ChEBI" id="CHEBI:29105"/>
    </ligand>
</feature>
<feature type="disulfide bond" evidence="2">
    <location>
        <begin position="65"/>
        <end position="111"/>
    </location>
</feature>
<feature type="disulfide bond" evidence="2">
    <location>
        <begin position="155"/>
        <end position="168"/>
    </location>
</feature>
<organism>
    <name type="scientific">Lysobacter enzymogenes</name>
    <dbReference type="NCBI Taxonomy" id="69"/>
    <lineage>
        <taxon>Bacteria</taxon>
        <taxon>Pseudomonadati</taxon>
        <taxon>Pseudomonadota</taxon>
        <taxon>Gammaproteobacteria</taxon>
        <taxon>Lysobacterales</taxon>
        <taxon>Lysobacteraceae</taxon>
        <taxon>Lysobacter</taxon>
    </lineage>
</organism>
<dbReference type="EC" id="3.4.24.32"/>
<dbReference type="PIR" id="A00994">
    <property type="entry name" value="LYYXB4"/>
</dbReference>
<dbReference type="SMR" id="P00801"/>
<dbReference type="STRING" id="69.GLE_0833"/>
<dbReference type="MEROPS" id="M23.001"/>
<dbReference type="GO" id="GO:0046872">
    <property type="term" value="F:metal ion binding"/>
    <property type="evidence" value="ECO:0007669"/>
    <property type="project" value="UniProtKB-KW"/>
</dbReference>
<dbReference type="GO" id="GO:0004222">
    <property type="term" value="F:metalloendopeptidase activity"/>
    <property type="evidence" value="ECO:0007669"/>
    <property type="project" value="InterPro"/>
</dbReference>
<dbReference type="GO" id="GO:0006508">
    <property type="term" value="P:proteolysis"/>
    <property type="evidence" value="ECO:0007669"/>
    <property type="project" value="UniProtKB-KW"/>
</dbReference>
<dbReference type="CDD" id="cd12797">
    <property type="entry name" value="M23_peptidase"/>
    <property type="match status" value="1"/>
</dbReference>
<dbReference type="Gene3D" id="2.70.70.10">
    <property type="entry name" value="Glucose Permease (Domain IIA)"/>
    <property type="match status" value="1"/>
</dbReference>
<dbReference type="InterPro" id="IPR011055">
    <property type="entry name" value="Dup_hybrid_motif"/>
</dbReference>
<dbReference type="InterPro" id="IPR000841">
    <property type="entry name" value="Pept_M23A_Blytic"/>
</dbReference>
<dbReference type="InterPro" id="IPR016047">
    <property type="entry name" value="Peptidase_M23"/>
</dbReference>
<dbReference type="Pfam" id="PF01551">
    <property type="entry name" value="Peptidase_M23"/>
    <property type="match status" value="1"/>
</dbReference>
<dbReference type="PRINTS" id="PR00933">
    <property type="entry name" value="BLYTICPTASE"/>
</dbReference>
<dbReference type="SUPFAM" id="SSF51261">
    <property type="entry name" value="Duplicated hybrid motif"/>
    <property type="match status" value="1"/>
</dbReference>
<name>PRLB_LYSEN</name>